<organism>
    <name type="scientific">Burkholderia lata (strain ATCC 17760 / DSM 23089 / LMG 22485 / NCIMB 9086 / R18194 / 383)</name>
    <dbReference type="NCBI Taxonomy" id="482957"/>
    <lineage>
        <taxon>Bacteria</taxon>
        <taxon>Pseudomonadati</taxon>
        <taxon>Pseudomonadota</taxon>
        <taxon>Betaproteobacteria</taxon>
        <taxon>Burkholderiales</taxon>
        <taxon>Burkholderiaceae</taxon>
        <taxon>Burkholderia</taxon>
        <taxon>Burkholderia cepacia complex</taxon>
    </lineage>
</organism>
<name>ATPD_BURL3</name>
<gene>
    <name evidence="1" type="primary">atpH</name>
    <name type="ordered locus">Bcep18194_A3285</name>
</gene>
<evidence type="ECO:0000255" key="1">
    <source>
        <dbReference type="HAMAP-Rule" id="MF_01416"/>
    </source>
</evidence>
<proteinExistence type="inferred from homology"/>
<feature type="chain" id="PRO_0000370928" description="ATP synthase subunit delta">
    <location>
        <begin position="1"/>
        <end position="179"/>
    </location>
</feature>
<reference key="1">
    <citation type="submission" date="2005-10" db="EMBL/GenBank/DDBJ databases">
        <title>Complete sequence of chromosome 1 of Burkholderia sp. 383.</title>
        <authorList>
            <consortium name="US DOE Joint Genome Institute"/>
            <person name="Copeland A."/>
            <person name="Lucas S."/>
            <person name="Lapidus A."/>
            <person name="Barry K."/>
            <person name="Detter J.C."/>
            <person name="Glavina T."/>
            <person name="Hammon N."/>
            <person name="Israni S."/>
            <person name="Pitluck S."/>
            <person name="Chain P."/>
            <person name="Malfatti S."/>
            <person name="Shin M."/>
            <person name="Vergez L."/>
            <person name="Schmutz J."/>
            <person name="Larimer F."/>
            <person name="Land M."/>
            <person name="Kyrpides N."/>
            <person name="Lykidis A."/>
            <person name="Richardson P."/>
        </authorList>
    </citation>
    <scope>NUCLEOTIDE SEQUENCE [LARGE SCALE GENOMIC DNA]</scope>
    <source>
        <strain>ATCC 17760 / DSM 23089 / LMG 22485 / NCIMB 9086 / R18194 / 383</strain>
    </source>
</reference>
<comment type="function">
    <text evidence="1">F(1)F(0) ATP synthase produces ATP from ADP in the presence of a proton or sodium gradient. F-type ATPases consist of two structural domains, F(1) containing the extramembraneous catalytic core and F(0) containing the membrane proton channel, linked together by a central stalk and a peripheral stalk. During catalysis, ATP synthesis in the catalytic domain of F(1) is coupled via a rotary mechanism of the central stalk subunits to proton translocation.</text>
</comment>
<comment type="function">
    <text evidence="1">This protein is part of the stalk that links CF(0) to CF(1). It either transmits conformational changes from CF(0) to CF(1) or is implicated in proton conduction.</text>
</comment>
<comment type="subunit">
    <text evidence="1">F-type ATPases have 2 components, F(1) - the catalytic core - and F(0) - the membrane proton channel. F(1) has five subunits: alpha(3), beta(3), gamma(1), delta(1), epsilon(1). F(0) has three main subunits: a(1), b(2) and c(10-14). The alpha and beta chains form an alternating ring which encloses part of the gamma chain. F(1) is attached to F(0) by a central stalk formed by the gamma and epsilon chains, while a peripheral stalk is formed by the delta and b chains.</text>
</comment>
<comment type="subcellular location">
    <subcellularLocation>
        <location evidence="1">Cell inner membrane</location>
        <topology evidence="1">Peripheral membrane protein</topology>
    </subcellularLocation>
</comment>
<comment type="similarity">
    <text evidence="1">Belongs to the ATPase delta chain family.</text>
</comment>
<keyword id="KW-0066">ATP synthesis</keyword>
<keyword id="KW-0997">Cell inner membrane</keyword>
<keyword id="KW-1003">Cell membrane</keyword>
<keyword id="KW-0139">CF(1)</keyword>
<keyword id="KW-0375">Hydrogen ion transport</keyword>
<keyword id="KW-0406">Ion transport</keyword>
<keyword id="KW-0472">Membrane</keyword>
<keyword id="KW-0813">Transport</keyword>
<accession>Q39KX9</accession>
<sequence>MAELATIARPYAEALFRVAEGGDIAAWSTLVQELAQVARLPEVLSVASSPKVTRTQVAELLLAAVKSPLGAGAEAKNFVQMLVDNHRIALLPEIAEQFEALKNEREGAADAEIVSAFPLNGADLESLVSGLERKFKRKLKPTVAVDSSLIGGVRVTVGDEVLDTSVRARLASMQAALTA</sequence>
<protein>
    <recommendedName>
        <fullName evidence="1">ATP synthase subunit delta</fullName>
    </recommendedName>
    <alternativeName>
        <fullName evidence="1">ATP synthase F(1) sector subunit delta</fullName>
    </alternativeName>
    <alternativeName>
        <fullName evidence="1">F-type ATPase subunit delta</fullName>
        <shortName evidence="1">F-ATPase subunit delta</shortName>
    </alternativeName>
</protein>
<dbReference type="EMBL" id="CP000151">
    <property type="protein sequence ID" value="ABB06887.1"/>
    <property type="molecule type" value="Genomic_DNA"/>
</dbReference>
<dbReference type="RefSeq" id="WP_011350524.1">
    <property type="nucleotide sequence ID" value="NZ_WNDV01000030.1"/>
</dbReference>
<dbReference type="SMR" id="Q39KX9"/>
<dbReference type="KEGG" id="bur:Bcep18194_A3285"/>
<dbReference type="PATRIC" id="fig|482957.22.peg.115"/>
<dbReference type="HOGENOM" id="CLU_085114_3_0_4"/>
<dbReference type="Proteomes" id="UP000002705">
    <property type="component" value="Chromosome 1"/>
</dbReference>
<dbReference type="GO" id="GO:0005886">
    <property type="term" value="C:plasma membrane"/>
    <property type="evidence" value="ECO:0007669"/>
    <property type="project" value="UniProtKB-SubCell"/>
</dbReference>
<dbReference type="GO" id="GO:0045259">
    <property type="term" value="C:proton-transporting ATP synthase complex"/>
    <property type="evidence" value="ECO:0007669"/>
    <property type="project" value="UniProtKB-KW"/>
</dbReference>
<dbReference type="GO" id="GO:0046933">
    <property type="term" value="F:proton-transporting ATP synthase activity, rotational mechanism"/>
    <property type="evidence" value="ECO:0007669"/>
    <property type="project" value="UniProtKB-UniRule"/>
</dbReference>
<dbReference type="Gene3D" id="1.10.520.20">
    <property type="entry name" value="N-terminal domain of the delta subunit of the F1F0-ATP synthase"/>
    <property type="match status" value="1"/>
</dbReference>
<dbReference type="HAMAP" id="MF_01416">
    <property type="entry name" value="ATP_synth_delta_bact"/>
    <property type="match status" value="1"/>
</dbReference>
<dbReference type="InterPro" id="IPR026015">
    <property type="entry name" value="ATP_synth_OSCP/delta_N_sf"/>
</dbReference>
<dbReference type="InterPro" id="IPR000711">
    <property type="entry name" value="ATPase_OSCP/dsu"/>
</dbReference>
<dbReference type="NCBIfam" id="TIGR01145">
    <property type="entry name" value="ATP_synt_delta"/>
    <property type="match status" value="1"/>
</dbReference>
<dbReference type="NCBIfam" id="NF004402">
    <property type="entry name" value="PRK05758.2-2"/>
    <property type="match status" value="1"/>
</dbReference>
<dbReference type="PANTHER" id="PTHR11910">
    <property type="entry name" value="ATP SYNTHASE DELTA CHAIN"/>
    <property type="match status" value="1"/>
</dbReference>
<dbReference type="Pfam" id="PF00213">
    <property type="entry name" value="OSCP"/>
    <property type="match status" value="1"/>
</dbReference>
<dbReference type="PRINTS" id="PR00125">
    <property type="entry name" value="ATPASEDELTA"/>
</dbReference>
<dbReference type="SUPFAM" id="SSF47928">
    <property type="entry name" value="N-terminal domain of the delta subunit of the F1F0-ATP synthase"/>
    <property type="match status" value="1"/>
</dbReference>